<name>RS9_CHLT2</name>
<feature type="chain" id="PRO_1000128103" description="Small ribosomal subunit protein uS9">
    <location>
        <begin position="1"/>
        <end position="129"/>
    </location>
</feature>
<feature type="region of interest" description="Disordered" evidence="2">
    <location>
        <begin position="98"/>
        <end position="129"/>
    </location>
</feature>
<feature type="compositionally biased region" description="Basic residues" evidence="2">
    <location>
        <begin position="110"/>
        <end position="129"/>
    </location>
</feature>
<sequence length="129" mass="14542">MIQESVATGRRKQAVSSVRLRSGNGKIDVNGKTLEQYFPLEVQRATILAPLRMLGDVNSFDLIIRVSGGGVQGQVIATRLGLARAVLQEKEDIKQELKAQGFLTRDPRKKERKKYGRKKARKSFQFSKR</sequence>
<comment type="similarity">
    <text evidence="1">Belongs to the universal ribosomal protein uS9 family.</text>
</comment>
<keyword id="KW-0687">Ribonucleoprotein</keyword>
<keyword id="KW-0689">Ribosomal protein</keyword>
<organism>
    <name type="scientific">Chlamydia trachomatis serovar L2 (strain ATCC VR-902B / DSM 19102 / 434/Bu)</name>
    <dbReference type="NCBI Taxonomy" id="471472"/>
    <lineage>
        <taxon>Bacteria</taxon>
        <taxon>Pseudomonadati</taxon>
        <taxon>Chlamydiota</taxon>
        <taxon>Chlamydiia</taxon>
        <taxon>Chlamydiales</taxon>
        <taxon>Chlamydiaceae</taxon>
        <taxon>Chlamydia/Chlamydophila group</taxon>
        <taxon>Chlamydia</taxon>
    </lineage>
</organism>
<dbReference type="EMBL" id="AM884176">
    <property type="protein sequence ID" value="CAP03821.1"/>
    <property type="molecule type" value="Genomic_DNA"/>
</dbReference>
<dbReference type="RefSeq" id="WP_009873578.1">
    <property type="nucleotide sequence ID" value="NC_010287.1"/>
</dbReference>
<dbReference type="RefSeq" id="YP_001654465.1">
    <property type="nucleotide sequence ID" value="NC_010287.1"/>
</dbReference>
<dbReference type="SMR" id="B0B9N4"/>
<dbReference type="KEGG" id="ctb:CTL0381"/>
<dbReference type="PATRIC" id="fig|471472.4.peg.412"/>
<dbReference type="HOGENOM" id="CLU_046483_2_1_0"/>
<dbReference type="Proteomes" id="UP001154402">
    <property type="component" value="Chromosome"/>
</dbReference>
<dbReference type="GO" id="GO:0022627">
    <property type="term" value="C:cytosolic small ribosomal subunit"/>
    <property type="evidence" value="ECO:0007669"/>
    <property type="project" value="TreeGrafter"/>
</dbReference>
<dbReference type="GO" id="GO:0003723">
    <property type="term" value="F:RNA binding"/>
    <property type="evidence" value="ECO:0007669"/>
    <property type="project" value="TreeGrafter"/>
</dbReference>
<dbReference type="GO" id="GO:0003735">
    <property type="term" value="F:structural constituent of ribosome"/>
    <property type="evidence" value="ECO:0007669"/>
    <property type="project" value="InterPro"/>
</dbReference>
<dbReference type="GO" id="GO:0006412">
    <property type="term" value="P:translation"/>
    <property type="evidence" value="ECO:0007669"/>
    <property type="project" value="UniProtKB-UniRule"/>
</dbReference>
<dbReference type="FunFam" id="3.30.230.10:FF:000141">
    <property type="entry name" value="30S ribosomal protein S9"/>
    <property type="match status" value="1"/>
</dbReference>
<dbReference type="Gene3D" id="3.30.230.10">
    <property type="match status" value="1"/>
</dbReference>
<dbReference type="HAMAP" id="MF_00532_B">
    <property type="entry name" value="Ribosomal_uS9_B"/>
    <property type="match status" value="1"/>
</dbReference>
<dbReference type="InterPro" id="IPR020568">
    <property type="entry name" value="Ribosomal_Su5_D2-typ_SF"/>
</dbReference>
<dbReference type="InterPro" id="IPR000754">
    <property type="entry name" value="Ribosomal_uS9"/>
</dbReference>
<dbReference type="InterPro" id="IPR023035">
    <property type="entry name" value="Ribosomal_uS9_bac/plastid"/>
</dbReference>
<dbReference type="InterPro" id="IPR020574">
    <property type="entry name" value="Ribosomal_uS9_CS"/>
</dbReference>
<dbReference type="InterPro" id="IPR014721">
    <property type="entry name" value="Ribsml_uS5_D2-typ_fold_subgr"/>
</dbReference>
<dbReference type="NCBIfam" id="NF001099">
    <property type="entry name" value="PRK00132.1"/>
    <property type="match status" value="1"/>
</dbReference>
<dbReference type="PANTHER" id="PTHR21569">
    <property type="entry name" value="RIBOSOMAL PROTEIN S9"/>
    <property type="match status" value="1"/>
</dbReference>
<dbReference type="PANTHER" id="PTHR21569:SF1">
    <property type="entry name" value="SMALL RIBOSOMAL SUBUNIT PROTEIN US9M"/>
    <property type="match status" value="1"/>
</dbReference>
<dbReference type="Pfam" id="PF00380">
    <property type="entry name" value="Ribosomal_S9"/>
    <property type="match status" value="1"/>
</dbReference>
<dbReference type="SUPFAM" id="SSF54211">
    <property type="entry name" value="Ribosomal protein S5 domain 2-like"/>
    <property type="match status" value="1"/>
</dbReference>
<dbReference type="PROSITE" id="PS00360">
    <property type="entry name" value="RIBOSOMAL_S9"/>
    <property type="match status" value="1"/>
</dbReference>
<protein>
    <recommendedName>
        <fullName evidence="1">Small ribosomal subunit protein uS9</fullName>
    </recommendedName>
    <alternativeName>
        <fullName evidence="3">30S ribosomal protein S9</fullName>
    </alternativeName>
</protein>
<accession>B0B9N4</accession>
<reference key="1">
    <citation type="journal article" date="2008" name="Genome Res.">
        <title>Chlamydia trachomatis: genome sequence analysis of lymphogranuloma venereum isolates.</title>
        <authorList>
            <person name="Thomson N.R."/>
            <person name="Holden M.T.G."/>
            <person name="Carder C."/>
            <person name="Lennard N."/>
            <person name="Lockey S.J."/>
            <person name="Marsh P."/>
            <person name="Skipp P."/>
            <person name="O'Connor C.D."/>
            <person name="Goodhead I."/>
            <person name="Norbertzcak H."/>
            <person name="Harris B."/>
            <person name="Ormond D."/>
            <person name="Rance R."/>
            <person name="Quail M.A."/>
            <person name="Parkhill J."/>
            <person name="Stephens R.S."/>
            <person name="Clarke I.N."/>
        </authorList>
    </citation>
    <scope>NUCLEOTIDE SEQUENCE [LARGE SCALE GENOMIC DNA]</scope>
    <source>
        <strain>ATCC VR-902B / DSM 19102 / 434/Bu</strain>
    </source>
</reference>
<proteinExistence type="inferred from homology"/>
<evidence type="ECO:0000255" key="1">
    <source>
        <dbReference type="HAMAP-Rule" id="MF_00532"/>
    </source>
</evidence>
<evidence type="ECO:0000256" key="2">
    <source>
        <dbReference type="SAM" id="MobiDB-lite"/>
    </source>
</evidence>
<evidence type="ECO:0000305" key="3"/>
<gene>
    <name evidence="1" type="primary">rpsI</name>
    <name type="ordered locus">CTL0381</name>
</gene>